<name>HTPG_NITMU</name>
<sequence length="639" mass="72907">MEATATKEHLNFQTEVKQLLKLMIHSLYSNKEIFLRELISNASDAADKLRFEALTDGALYESDSDLKIRVSYDKEARTITVADNGIGMSRQEVIDHIGTIAKSGTREFFDALTGDQAKDAHLIGQFGVGFYSAFIVADKVTLTTRRAGLTHEHGVRWESGGEGDYTLETIDKPGRGTEVTLHLREGEDELLNGWRLRSIIRKYSDHITLPIVMKKEEWSQEKNENTVTEEDETINQASALWARPKNEISEEQYNEFYKHVAHDFEPPLAYVHARVEGKQEYTQLLYVPSRAPFDLYDRESRHGIKLYVRRVFIMDDAKQLLPNYLRFVRGIIDSNDLPLNVSREILQESKDIEAMRAGSVKKVLGLLDDLAQSETDEGKAKFKTFWKEFGQVMKEGVAEDYANRERIAKLLRFVSTHSDSEEQDVSLSDYVGRMKDGQEKIYYVTADSLTAAKSSPHLEIFRKKDIEVILLFDRVDEWLVANLPEFEGKHLQSVAKGSLDLGKLEDEAEKKEQEKEAGEYKELTEKIKEVLGEQVKDVRITLRLTESPACLVTETHDMSGNLERLLKSAGQKVTHTKPILEINPYHPMVERLKSEETHFADWSHILFDQALLAEGGQLEDPASFVKRINQLFLSTGSKE</sequence>
<evidence type="ECO:0000255" key="1">
    <source>
        <dbReference type="HAMAP-Rule" id="MF_00505"/>
    </source>
</evidence>
<accession>Q2YA09</accession>
<reference key="1">
    <citation type="submission" date="2005-08" db="EMBL/GenBank/DDBJ databases">
        <title>Complete sequence of chromosome 1 of Nitrosospira multiformis ATCC 25196.</title>
        <authorList>
            <person name="Copeland A."/>
            <person name="Lucas S."/>
            <person name="Lapidus A."/>
            <person name="Barry K."/>
            <person name="Detter J.C."/>
            <person name="Glavina T."/>
            <person name="Hammon N."/>
            <person name="Israni S."/>
            <person name="Pitluck S."/>
            <person name="Chain P."/>
            <person name="Malfatti S."/>
            <person name="Shin M."/>
            <person name="Vergez L."/>
            <person name="Schmutz J."/>
            <person name="Larimer F."/>
            <person name="Land M."/>
            <person name="Hauser L."/>
            <person name="Kyrpides N."/>
            <person name="Lykidis A."/>
            <person name="Richardson P."/>
        </authorList>
    </citation>
    <scope>NUCLEOTIDE SEQUENCE [LARGE SCALE GENOMIC DNA]</scope>
    <source>
        <strain>ATCC 25196 / NCIMB 11849 / C 71</strain>
    </source>
</reference>
<organism>
    <name type="scientific">Nitrosospira multiformis (strain ATCC 25196 / NCIMB 11849 / C 71)</name>
    <dbReference type="NCBI Taxonomy" id="323848"/>
    <lineage>
        <taxon>Bacteria</taxon>
        <taxon>Pseudomonadati</taxon>
        <taxon>Pseudomonadota</taxon>
        <taxon>Betaproteobacteria</taxon>
        <taxon>Nitrosomonadales</taxon>
        <taxon>Nitrosomonadaceae</taxon>
        <taxon>Nitrosospira</taxon>
    </lineage>
</organism>
<proteinExistence type="inferred from homology"/>
<gene>
    <name evidence="1" type="primary">htpG</name>
    <name type="ordered locus">Nmul_A1109</name>
</gene>
<comment type="function">
    <text evidence="1">Molecular chaperone. Has ATPase activity.</text>
</comment>
<comment type="subunit">
    <text evidence="1">Homodimer.</text>
</comment>
<comment type="subcellular location">
    <subcellularLocation>
        <location evidence="1">Cytoplasm</location>
    </subcellularLocation>
</comment>
<comment type="similarity">
    <text evidence="1">Belongs to the heat shock protein 90 family.</text>
</comment>
<dbReference type="EMBL" id="CP000103">
    <property type="protein sequence ID" value="ABB74412.1"/>
    <property type="molecule type" value="Genomic_DNA"/>
</dbReference>
<dbReference type="RefSeq" id="WP_011380453.1">
    <property type="nucleotide sequence ID" value="NC_007614.1"/>
</dbReference>
<dbReference type="SMR" id="Q2YA09"/>
<dbReference type="STRING" id="323848.Nmul_A1109"/>
<dbReference type="KEGG" id="nmu:Nmul_A1109"/>
<dbReference type="eggNOG" id="COG0326">
    <property type="taxonomic scope" value="Bacteria"/>
</dbReference>
<dbReference type="HOGENOM" id="CLU_006684_3_0_4"/>
<dbReference type="OrthoDB" id="9802640at2"/>
<dbReference type="Proteomes" id="UP000002718">
    <property type="component" value="Chromosome"/>
</dbReference>
<dbReference type="GO" id="GO:0005737">
    <property type="term" value="C:cytoplasm"/>
    <property type="evidence" value="ECO:0007669"/>
    <property type="project" value="UniProtKB-SubCell"/>
</dbReference>
<dbReference type="GO" id="GO:0005524">
    <property type="term" value="F:ATP binding"/>
    <property type="evidence" value="ECO:0007669"/>
    <property type="project" value="UniProtKB-UniRule"/>
</dbReference>
<dbReference type="GO" id="GO:0016887">
    <property type="term" value="F:ATP hydrolysis activity"/>
    <property type="evidence" value="ECO:0007669"/>
    <property type="project" value="InterPro"/>
</dbReference>
<dbReference type="GO" id="GO:0140662">
    <property type="term" value="F:ATP-dependent protein folding chaperone"/>
    <property type="evidence" value="ECO:0007669"/>
    <property type="project" value="InterPro"/>
</dbReference>
<dbReference type="GO" id="GO:0051082">
    <property type="term" value="F:unfolded protein binding"/>
    <property type="evidence" value="ECO:0007669"/>
    <property type="project" value="UniProtKB-UniRule"/>
</dbReference>
<dbReference type="CDD" id="cd16927">
    <property type="entry name" value="HATPase_Hsp90-like"/>
    <property type="match status" value="1"/>
</dbReference>
<dbReference type="FunFam" id="3.40.50.11260:FF:000005">
    <property type="entry name" value="Heat shock protein 90"/>
    <property type="match status" value="1"/>
</dbReference>
<dbReference type="FunFam" id="3.30.230.80:FF:000002">
    <property type="entry name" value="Molecular chaperone HtpG"/>
    <property type="match status" value="1"/>
</dbReference>
<dbReference type="FunFam" id="3.30.565.10:FF:000009">
    <property type="entry name" value="Molecular chaperone HtpG"/>
    <property type="match status" value="1"/>
</dbReference>
<dbReference type="Gene3D" id="3.30.230.80">
    <property type="match status" value="1"/>
</dbReference>
<dbReference type="Gene3D" id="3.40.50.11260">
    <property type="match status" value="1"/>
</dbReference>
<dbReference type="Gene3D" id="1.20.120.790">
    <property type="entry name" value="Heat shock protein 90, C-terminal domain"/>
    <property type="match status" value="1"/>
</dbReference>
<dbReference type="Gene3D" id="3.30.565.10">
    <property type="entry name" value="Histidine kinase-like ATPase, C-terminal domain"/>
    <property type="match status" value="1"/>
</dbReference>
<dbReference type="HAMAP" id="MF_00505">
    <property type="entry name" value="HSP90"/>
    <property type="match status" value="1"/>
</dbReference>
<dbReference type="InterPro" id="IPR036890">
    <property type="entry name" value="HATPase_C_sf"/>
</dbReference>
<dbReference type="InterPro" id="IPR019805">
    <property type="entry name" value="Heat_shock_protein_90_CS"/>
</dbReference>
<dbReference type="InterPro" id="IPR037196">
    <property type="entry name" value="HSP90_C"/>
</dbReference>
<dbReference type="InterPro" id="IPR001404">
    <property type="entry name" value="Hsp90_fam"/>
</dbReference>
<dbReference type="InterPro" id="IPR020575">
    <property type="entry name" value="Hsp90_N"/>
</dbReference>
<dbReference type="InterPro" id="IPR020568">
    <property type="entry name" value="Ribosomal_Su5_D2-typ_SF"/>
</dbReference>
<dbReference type="NCBIfam" id="NF003555">
    <property type="entry name" value="PRK05218.1"/>
    <property type="match status" value="1"/>
</dbReference>
<dbReference type="PANTHER" id="PTHR11528">
    <property type="entry name" value="HEAT SHOCK PROTEIN 90 FAMILY MEMBER"/>
    <property type="match status" value="1"/>
</dbReference>
<dbReference type="Pfam" id="PF13589">
    <property type="entry name" value="HATPase_c_3"/>
    <property type="match status" value="1"/>
</dbReference>
<dbReference type="Pfam" id="PF00183">
    <property type="entry name" value="HSP90"/>
    <property type="match status" value="1"/>
</dbReference>
<dbReference type="PIRSF" id="PIRSF002583">
    <property type="entry name" value="Hsp90"/>
    <property type="match status" value="1"/>
</dbReference>
<dbReference type="PRINTS" id="PR00775">
    <property type="entry name" value="HEATSHOCK90"/>
</dbReference>
<dbReference type="SMART" id="SM00387">
    <property type="entry name" value="HATPase_c"/>
    <property type="match status" value="1"/>
</dbReference>
<dbReference type="SUPFAM" id="SSF55874">
    <property type="entry name" value="ATPase domain of HSP90 chaperone/DNA topoisomerase II/histidine kinase"/>
    <property type="match status" value="1"/>
</dbReference>
<dbReference type="SUPFAM" id="SSF110942">
    <property type="entry name" value="HSP90 C-terminal domain"/>
    <property type="match status" value="1"/>
</dbReference>
<dbReference type="SUPFAM" id="SSF54211">
    <property type="entry name" value="Ribosomal protein S5 domain 2-like"/>
    <property type="match status" value="1"/>
</dbReference>
<dbReference type="PROSITE" id="PS00298">
    <property type="entry name" value="HSP90"/>
    <property type="match status" value="1"/>
</dbReference>
<protein>
    <recommendedName>
        <fullName evidence="1">Chaperone protein HtpG</fullName>
    </recommendedName>
    <alternativeName>
        <fullName evidence="1">Heat shock protein HtpG</fullName>
    </alternativeName>
    <alternativeName>
        <fullName evidence="1">High temperature protein G</fullName>
    </alternativeName>
</protein>
<keyword id="KW-0067">ATP-binding</keyword>
<keyword id="KW-0143">Chaperone</keyword>
<keyword id="KW-0963">Cytoplasm</keyword>
<keyword id="KW-0547">Nucleotide-binding</keyword>
<keyword id="KW-1185">Reference proteome</keyword>
<keyword id="KW-0346">Stress response</keyword>
<feature type="chain" id="PRO_0000236999" description="Chaperone protein HtpG">
    <location>
        <begin position="1"/>
        <end position="639"/>
    </location>
</feature>
<feature type="region of interest" description="A; substrate-binding" evidence="1">
    <location>
        <begin position="1"/>
        <end position="343"/>
    </location>
</feature>
<feature type="region of interest" description="B" evidence="1">
    <location>
        <begin position="344"/>
        <end position="564"/>
    </location>
</feature>
<feature type="region of interest" description="C" evidence="1">
    <location>
        <begin position="565"/>
        <end position="639"/>
    </location>
</feature>